<accession>A7ZWZ9</accession>
<dbReference type="EC" id="4.1.3.39" evidence="1"/>
<dbReference type="EMBL" id="CP000802">
    <property type="protein sequence ID" value="ABV04803.1"/>
    <property type="molecule type" value="Genomic_DNA"/>
</dbReference>
<dbReference type="RefSeq" id="WP_001013492.1">
    <property type="nucleotide sequence ID" value="NC_009800.1"/>
</dbReference>
<dbReference type="SMR" id="A7ZWZ9"/>
<dbReference type="KEGG" id="ecx:EcHS_A0416"/>
<dbReference type="HOGENOM" id="CLU_049173_0_0_6"/>
<dbReference type="UniPathway" id="UPA00714"/>
<dbReference type="GO" id="GO:0003852">
    <property type="term" value="F:2-isopropylmalate synthase activity"/>
    <property type="evidence" value="ECO:0007669"/>
    <property type="project" value="TreeGrafter"/>
</dbReference>
<dbReference type="GO" id="GO:0008701">
    <property type="term" value="F:4-hydroxy-2-oxovalerate aldolase activity"/>
    <property type="evidence" value="ECO:0007669"/>
    <property type="project" value="UniProtKB-UniRule"/>
</dbReference>
<dbReference type="GO" id="GO:0030145">
    <property type="term" value="F:manganese ion binding"/>
    <property type="evidence" value="ECO:0007669"/>
    <property type="project" value="UniProtKB-UniRule"/>
</dbReference>
<dbReference type="GO" id="GO:0019380">
    <property type="term" value="P:3-phenylpropionate catabolic process"/>
    <property type="evidence" value="ECO:0007669"/>
    <property type="project" value="UniProtKB-UniRule"/>
</dbReference>
<dbReference type="GO" id="GO:0009098">
    <property type="term" value="P:L-leucine biosynthetic process"/>
    <property type="evidence" value="ECO:0007669"/>
    <property type="project" value="TreeGrafter"/>
</dbReference>
<dbReference type="CDD" id="cd07943">
    <property type="entry name" value="DRE_TIM_HOA"/>
    <property type="match status" value="1"/>
</dbReference>
<dbReference type="FunFam" id="1.10.8.60:FF:000042">
    <property type="entry name" value="4-hydroxy-2-oxovalerate aldolase"/>
    <property type="match status" value="1"/>
</dbReference>
<dbReference type="FunFam" id="3.20.20.70:FF:000072">
    <property type="entry name" value="4-hydroxy-2-oxovalerate aldolase"/>
    <property type="match status" value="1"/>
</dbReference>
<dbReference type="Gene3D" id="1.10.8.60">
    <property type="match status" value="1"/>
</dbReference>
<dbReference type="Gene3D" id="3.20.20.70">
    <property type="entry name" value="Aldolase class I"/>
    <property type="match status" value="1"/>
</dbReference>
<dbReference type="HAMAP" id="MF_01656">
    <property type="entry name" value="HOA"/>
    <property type="match status" value="1"/>
</dbReference>
<dbReference type="InterPro" id="IPR050073">
    <property type="entry name" value="2-IPM_HCS-like"/>
</dbReference>
<dbReference type="InterPro" id="IPR017629">
    <property type="entry name" value="4OH_2_O-val_aldolase"/>
</dbReference>
<dbReference type="InterPro" id="IPR013785">
    <property type="entry name" value="Aldolase_TIM"/>
</dbReference>
<dbReference type="InterPro" id="IPR012425">
    <property type="entry name" value="DmpG_comm"/>
</dbReference>
<dbReference type="InterPro" id="IPR035685">
    <property type="entry name" value="DRE_TIM_HOA"/>
</dbReference>
<dbReference type="InterPro" id="IPR000891">
    <property type="entry name" value="PYR_CT"/>
</dbReference>
<dbReference type="NCBIfam" id="TIGR03217">
    <property type="entry name" value="4OH_2_O_val_ald"/>
    <property type="match status" value="1"/>
</dbReference>
<dbReference type="NCBIfam" id="NF006049">
    <property type="entry name" value="PRK08195.1"/>
    <property type="match status" value="1"/>
</dbReference>
<dbReference type="PANTHER" id="PTHR10277:SF9">
    <property type="entry name" value="2-ISOPROPYLMALATE SYNTHASE 1, CHLOROPLASTIC-RELATED"/>
    <property type="match status" value="1"/>
</dbReference>
<dbReference type="PANTHER" id="PTHR10277">
    <property type="entry name" value="HOMOCITRATE SYNTHASE-RELATED"/>
    <property type="match status" value="1"/>
</dbReference>
<dbReference type="Pfam" id="PF07836">
    <property type="entry name" value="DmpG_comm"/>
    <property type="match status" value="1"/>
</dbReference>
<dbReference type="Pfam" id="PF00682">
    <property type="entry name" value="HMGL-like"/>
    <property type="match status" value="1"/>
</dbReference>
<dbReference type="SUPFAM" id="SSF51569">
    <property type="entry name" value="Aldolase"/>
    <property type="match status" value="1"/>
</dbReference>
<dbReference type="SUPFAM" id="SSF89000">
    <property type="entry name" value="post-HMGL domain-like"/>
    <property type="match status" value="1"/>
</dbReference>
<dbReference type="PROSITE" id="PS50991">
    <property type="entry name" value="PYR_CT"/>
    <property type="match status" value="1"/>
</dbReference>
<name>HOA_ECOHS</name>
<reference key="1">
    <citation type="journal article" date="2008" name="J. Bacteriol.">
        <title>The pangenome structure of Escherichia coli: comparative genomic analysis of E. coli commensal and pathogenic isolates.</title>
        <authorList>
            <person name="Rasko D.A."/>
            <person name="Rosovitz M.J."/>
            <person name="Myers G.S.A."/>
            <person name="Mongodin E.F."/>
            <person name="Fricke W.F."/>
            <person name="Gajer P."/>
            <person name="Crabtree J."/>
            <person name="Sebaihia M."/>
            <person name="Thomson N.R."/>
            <person name="Chaudhuri R."/>
            <person name="Henderson I.R."/>
            <person name="Sperandio V."/>
            <person name="Ravel J."/>
        </authorList>
    </citation>
    <scope>NUCLEOTIDE SEQUENCE [LARGE SCALE GENOMIC DNA]</scope>
    <source>
        <strain>HS</strain>
    </source>
</reference>
<sequence length="337" mass="36479">MNGKKLYISDVTLRDGMHAIRHQYSLENVRHIAKALDDARVDSIEVAHGDGLQGSSFNYGFGAHSDLEWIEAAADVVKHAKIATLLLPGIGTIHDLKNAWQAGARVVRVATHCTEADVSAQHIQYARELGMDTVGFLMMSHMTTPENLAKQAKLMEGYGATCIYVVDSGGAMNMSDIRDRFRALKAELKPETQTGMHAHHNLSLGVANSIAAVEEGCDRIDASLAGMGAGAGNAPLEVFIAAADKLGWQHGTDLYALMDAADDLVRPLQDRPVRVDRETLALGYAGVYSSFLRHCETAAARYGLSAVDILVELGKRRMVGGQEDMIVDVALDLRNNK</sequence>
<organism>
    <name type="scientific">Escherichia coli O9:H4 (strain HS)</name>
    <dbReference type="NCBI Taxonomy" id="331112"/>
    <lineage>
        <taxon>Bacteria</taxon>
        <taxon>Pseudomonadati</taxon>
        <taxon>Pseudomonadota</taxon>
        <taxon>Gammaproteobacteria</taxon>
        <taxon>Enterobacterales</taxon>
        <taxon>Enterobacteriaceae</taxon>
        <taxon>Escherichia</taxon>
    </lineage>
</organism>
<comment type="function">
    <text evidence="1">Catalyzes the retro-aldol cleavage of 4-hydroxy-2-oxopentanoate to pyruvate and acetaldehyde. Is involved in the meta-cleavage pathway for the degradation of aromatic compounds.</text>
</comment>
<comment type="catalytic activity">
    <reaction evidence="1">
        <text>(S)-4-hydroxy-2-oxopentanoate = acetaldehyde + pyruvate</text>
        <dbReference type="Rhea" id="RHEA:22624"/>
        <dbReference type="ChEBI" id="CHEBI:15343"/>
        <dbReference type="ChEBI" id="CHEBI:15361"/>
        <dbReference type="ChEBI" id="CHEBI:73143"/>
        <dbReference type="EC" id="4.1.3.39"/>
    </reaction>
</comment>
<comment type="pathway">
    <text evidence="1">Aromatic compound metabolism; 3-phenylpropanoate degradation.</text>
</comment>
<comment type="subunit">
    <text evidence="1">Interacts with MhpF.</text>
</comment>
<comment type="similarity">
    <text evidence="1">Belongs to the 4-hydroxy-2-oxovalerate aldolase family.</text>
</comment>
<gene>
    <name evidence="1" type="primary">mhpE</name>
    <name type="ordered locus">EcHS_A0416</name>
</gene>
<keyword id="KW-0058">Aromatic hydrocarbons catabolism</keyword>
<keyword id="KW-0456">Lyase</keyword>
<keyword id="KW-0464">Manganese</keyword>
<keyword id="KW-0479">Metal-binding</keyword>
<proteinExistence type="inferred from homology"/>
<protein>
    <recommendedName>
        <fullName evidence="1">4-hydroxy-2-oxovalerate aldolase</fullName>
        <shortName evidence="1">HOA</shortName>
        <ecNumber evidence="1">4.1.3.39</ecNumber>
    </recommendedName>
    <alternativeName>
        <fullName evidence="1">4-hydroxy-2-keto-pentanoic acid aldolase</fullName>
    </alternativeName>
    <alternativeName>
        <fullName evidence="1">4-hydroxy-2-oxopentanoate aldolase</fullName>
    </alternativeName>
</protein>
<feature type="chain" id="PRO_0000337806" description="4-hydroxy-2-oxovalerate aldolase">
    <location>
        <begin position="1"/>
        <end position="337"/>
    </location>
</feature>
<feature type="domain" description="Pyruvate carboxyltransferase" evidence="1">
    <location>
        <begin position="6"/>
        <end position="258"/>
    </location>
</feature>
<feature type="active site" description="Proton acceptor" evidence="1">
    <location>
        <position position="18"/>
    </location>
</feature>
<feature type="binding site" evidence="1">
    <location>
        <begin position="14"/>
        <end position="15"/>
    </location>
    <ligand>
        <name>substrate</name>
    </ligand>
</feature>
<feature type="binding site" evidence="1">
    <location>
        <position position="15"/>
    </location>
    <ligand>
        <name>Mn(2+)</name>
        <dbReference type="ChEBI" id="CHEBI:29035"/>
    </ligand>
</feature>
<feature type="binding site" evidence="1">
    <location>
        <position position="168"/>
    </location>
    <ligand>
        <name>substrate</name>
    </ligand>
</feature>
<feature type="binding site" evidence="1">
    <location>
        <position position="197"/>
    </location>
    <ligand>
        <name>Mn(2+)</name>
        <dbReference type="ChEBI" id="CHEBI:29035"/>
    </ligand>
</feature>
<feature type="binding site" evidence="1">
    <location>
        <position position="197"/>
    </location>
    <ligand>
        <name>substrate</name>
    </ligand>
</feature>
<feature type="binding site" evidence="1">
    <location>
        <position position="199"/>
    </location>
    <ligand>
        <name>Mn(2+)</name>
        <dbReference type="ChEBI" id="CHEBI:29035"/>
    </ligand>
</feature>
<feature type="binding site" evidence="1">
    <location>
        <position position="288"/>
    </location>
    <ligand>
        <name>substrate</name>
    </ligand>
</feature>
<feature type="site" description="Transition state stabilizer" evidence="1">
    <location>
        <position position="14"/>
    </location>
</feature>
<evidence type="ECO:0000255" key="1">
    <source>
        <dbReference type="HAMAP-Rule" id="MF_01656"/>
    </source>
</evidence>